<organism>
    <name type="scientific">Mus musculus</name>
    <name type="common">Mouse</name>
    <dbReference type="NCBI Taxonomy" id="10090"/>
    <lineage>
        <taxon>Eukaryota</taxon>
        <taxon>Metazoa</taxon>
        <taxon>Chordata</taxon>
        <taxon>Craniata</taxon>
        <taxon>Vertebrata</taxon>
        <taxon>Euteleostomi</taxon>
        <taxon>Mammalia</taxon>
        <taxon>Eutheria</taxon>
        <taxon>Euarchontoglires</taxon>
        <taxon>Glires</taxon>
        <taxon>Rodentia</taxon>
        <taxon>Myomorpha</taxon>
        <taxon>Muroidea</taxon>
        <taxon>Muridae</taxon>
        <taxon>Murinae</taxon>
        <taxon>Mus</taxon>
        <taxon>Mus</taxon>
    </lineage>
</organism>
<proteinExistence type="evidence at protein level"/>
<sequence length="361" mass="39907">MEEREWGARSARAGSPASPPSPRLDVSSYSFDPLLALYAPRLPPIPYPNAPCFNNVAEYESFLKGGRTGRGRARGTGEPASAGTSTGTSTGAGSSSRARRRAAPTPDPERIQRLRRLMVVKEDTDGTAGARRQGPGRSKKAPRNVLTRMPLHEGSPLGELHRCIREGVKVNVHIRTFKGLRGVCTGFLVAFDKFWNMALTDVDETYRKPVLGKAYERDSSLTLTRLFDRLKLQDSSKKEADSKSAVEDSTLSRYSQTSTWKVASVWGRGDTDRSSHRRSRSVPSSLQASAREESRSELSGRTTRTEGSSVGGTFSRATTLSRGQSRKKKRKPKVDYQQVFTRHINQIFIRGENVLLVHLAQ</sequence>
<reference key="1">
    <citation type="journal article" date="2003" name="Genes Dev.">
        <title>Unique Sm core structure of U7 snRNPs: assembly by a specialized SMN complex and the role of a new component, Lsm11, in histone RNA processing.</title>
        <authorList>
            <person name="Pillai R.S."/>
            <person name="Grimmler M."/>
            <person name="Meister G."/>
            <person name="Will C.L."/>
            <person name="Luehrmann R."/>
            <person name="Fischer U."/>
            <person name="Schuemperli D."/>
        </authorList>
    </citation>
    <scope>NUCLEOTIDE SEQUENCE [MRNA]</scope>
    <scope>FUNCTION</scope>
    <scope>IDENTIFICATION IN THE U7 SNRNP COMPLEX</scope>
    <scope>INTERACTION WITH ZNF473</scope>
</reference>
<reference key="2">
    <citation type="journal article" date="2005" name="Science">
        <title>The transcriptional landscape of the mammalian genome.</title>
        <authorList>
            <person name="Carninci P."/>
            <person name="Kasukawa T."/>
            <person name="Katayama S."/>
            <person name="Gough J."/>
            <person name="Frith M.C."/>
            <person name="Maeda N."/>
            <person name="Oyama R."/>
            <person name="Ravasi T."/>
            <person name="Lenhard B."/>
            <person name="Wells C."/>
            <person name="Kodzius R."/>
            <person name="Shimokawa K."/>
            <person name="Bajic V.B."/>
            <person name="Brenner S.E."/>
            <person name="Batalov S."/>
            <person name="Forrest A.R."/>
            <person name="Zavolan M."/>
            <person name="Davis M.J."/>
            <person name="Wilming L.G."/>
            <person name="Aidinis V."/>
            <person name="Allen J.E."/>
            <person name="Ambesi-Impiombato A."/>
            <person name="Apweiler R."/>
            <person name="Aturaliya R.N."/>
            <person name="Bailey T.L."/>
            <person name="Bansal M."/>
            <person name="Baxter L."/>
            <person name="Beisel K.W."/>
            <person name="Bersano T."/>
            <person name="Bono H."/>
            <person name="Chalk A.M."/>
            <person name="Chiu K.P."/>
            <person name="Choudhary V."/>
            <person name="Christoffels A."/>
            <person name="Clutterbuck D.R."/>
            <person name="Crowe M.L."/>
            <person name="Dalla E."/>
            <person name="Dalrymple B.P."/>
            <person name="de Bono B."/>
            <person name="Della Gatta G."/>
            <person name="di Bernardo D."/>
            <person name="Down T."/>
            <person name="Engstrom P."/>
            <person name="Fagiolini M."/>
            <person name="Faulkner G."/>
            <person name="Fletcher C.F."/>
            <person name="Fukushima T."/>
            <person name="Furuno M."/>
            <person name="Futaki S."/>
            <person name="Gariboldi M."/>
            <person name="Georgii-Hemming P."/>
            <person name="Gingeras T.R."/>
            <person name="Gojobori T."/>
            <person name="Green R.E."/>
            <person name="Gustincich S."/>
            <person name="Harbers M."/>
            <person name="Hayashi Y."/>
            <person name="Hensch T.K."/>
            <person name="Hirokawa N."/>
            <person name="Hill D."/>
            <person name="Huminiecki L."/>
            <person name="Iacono M."/>
            <person name="Ikeo K."/>
            <person name="Iwama A."/>
            <person name="Ishikawa T."/>
            <person name="Jakt M."/>
            <person name="Kanapin A."/>
            <person name="Katoh M."/>
            <person name="Kawasawa Y."/>
            <person name="Kelso J."/>
            <person name="Kitamura H."/>
            <person name="Kitano H."/>
            <person name="Kollias G."/>
            <person name="Krishnan S.P."/>
            <person name="Kruger A."/>
            <person name="Kummerfeld S.K."/>
            <person name="Kurochkin I.V."/>
            <person name="Lareau L.F."/>
            <person name="Lazarevic D."/>
            <person name="Lipovich L."/>
            <person name="Liu J."/>
            <person name="Liuni S."/>
            <person name="McWilliam S."/>
            <person name="Madan Babu M."/>
            <person name="Madera M."/>
            <person name="Marchionni L."/>
            <person name="Matsuda H."/>
            <person name="Matsuzawa S."/>
            <person name="Miki H."/>
            <person name="Mignone F."/>
            <person name="Miyake S."/>
            <person name="Morris K."/>
            <person name="Mottagui-Tabar S."/>
            <person name="Mulder N."/>
            <person name="Nakano N."/>
            <person name="Nakauchi H."/>
            <person name="Ng P."/>
            <person name="Nilsson R."/>
            <person name="Nishiguchi S."/>
            <person name="Nishikawa S."/>
            <person name="Nori F."/>
            <person name="Ohara O."/>
            <person name="Okazaki Y."/>
            <person name="Orlando V."/>
            <person name="Pang K.C."/>
            <person name="Pavan W.J."/>
            <person name="Pavesi G."/>
            <person name="Pesole G."/>
            <person name="Petrovsky N."/>
            <person name="Piazza S."/>
            <person name="Reed J."/>
            <person name="Reid J.F."/>
            <person name="Ring B.Z."/>
            <person name="Ringwald M."/>
            <person name="Rost B."/>
            <person name="Ruan Y."/>
            <person name="Salzberg S.L."/>
            <person name="Sandelin A."/>
            <person name="Schneider C."/>
            <person name="Schoenbach C."/>
            <person name="Sekiguchi K."/>
            <person name="Semple C.A."/>
            <person name="Seno S."/>
            <person name="Sessa L."/>
            <person name="Sheng Y."/>
            <person name="Shibata Y."/>
            <person name="Shimada H."/>
            <person name="Shimada K."/>
            <person name="Silva D."/>
            <person name="Sinclair B."/>
            <person name="Sperling S."/>
            <person name="Stupka E."/>
            <person name="Sugiura K."/>
            <person name="Sultana R."/>
            <person name="Takenaka Y."/>
            <person name="Taki K."/>
            <person name="Tammoja K."/>
            <person name="Tan S.L."/>
            <person name="Tang S."/>
            <person name="Taylor M.S."/>
            <person name="Tegner J."/>
            <person name="Teichmann S.A."/>
            <person name="Ueda H.R."/>
            <person name="van Nimwegen E."/>
            <person name="Verardo R."/>
            <person name="Wei C.L."/>
            <person name="Yagi K."/>
            <person name="Yamanishi H."/>
            <person name="Zabarovsky E."/>
            <person name="Zhu S."/>
            <person name="Zimmer A."/>
            <person name="Hide W."/>
            <person name="Bult C."/>
            <person name="Grimmond S.M."/>
            <person name="Teasdale R.D."/>
            <person name="Liu E.T."/>
            <person name="Brusic V."/>
            <person name="Quackenbush J."/>
            <person name="Wahlestedt C."/>
            <person name="Mattick J.S."/>
            <person name="Hume D.A."/>
            <person name="Kai C."/>
            <person name="Sasaki D."/>
            <person name="Tomaru Y."/>
            <person name="Fukuda S."/>
            <person name="Kanamori-Katayama M."/>
            <person name="Suzuki M."/>
            <person name="Aoki J."/>
            <person name="Arakawa T."/>
            <person name="Iida J."/>
            <person name="Imamura K."/>
            <person name="Itoh M."/>
            <person name="Kato T."/>
            <person name="Kawaji H."/>
            <person name="Kawagashira N."/>
            <person name="Kawashima T."/>
            <person name="Kojima M."/>
            <person name="Kondo S."/>
            <person name="Konno H."/>
            <person name="Nakano K."/>
            <person name="Ninomiya N."/>
            <person name="Nishio T."/>
            <person name="Okada M."/>
            <person name="Plessy C."/>
            <person name="Shibata K."/>
            <person name="Shiraki T."/>
            <person name="Suzuki S."/>
            <person name="Tagami M."/>
            <person name="Waki K."/>
            <person name="Watahiki A."/>
            <person name="Okamura-Oho Y."/>
            <person name="Suzuki H."/>
            <person name="Kawai J."/>
            <person name="Hayashizaki Y."/>
        </authorList>
    </citation>
    <scope>NUCLEOTIDE SEQUENCE [LARGE SCALE MRNA]</scope>
    <source>
        <strain>C57BL/6J</strain>
        <tissue>Cerebellum</tissue>
    </source>
</reference>
<reference key="3">
    <citation type="journal article" date="2005" name="J. Biol. Chem.">
        <title>Toward an assembly line for U7 snRNPs: interactions of U7-specific Lsm proteins with PRMT5 and SMN complexes.</title>
        <authorList>
            <person name="Azzouz T.N."/>
            <person name="Pillai R.S."/>
            <person name="Dapp C."/>
            <person name="Chari A."/>
            <person name="Meister G."/>
            <person name="Kambach C."/>
            <person name="Fischer U."/>
            <person name="Schuemperli D."/>
        </authorList>
    </citation>
    <scope>INTERACTION WITH CLNS1A; PRMT5 AND WDR77</scope>
    <scope>LACK OF METHYLATION</scope>
</reference>
<reference key="4">
    <citation type="journal article" date="2005" name="Nucleic Acids Res.">
        <title>U7 snRNP-specific Lsm11 protein: dual binding contacts with the 100 kDa zinc finger processing factor (ZFP100) and a ZFP100-independent function in histone RNA 3'-end processing.</title>
        <authorList>
            <person name="Azzouz T.N."/>
            <person name="Gruber A."/>
            <person name="Schuemperli D."/>
        </authorList>
    </citation>
    <scope>FUNCTION</scope>
    <scope>MUTAGENESIS OF 33-PRO--LEU-35; 59-TYR--SER-61; 108-PRO--ARG-110 AND 149-MET--LEU-151</scope>
    <scope>INTERACTION WITH ZNF473</scope>
</reference>
<reference key="5">
    <citation type="journal article" date="2006" name="Mol. Cell. Biol.">
        <title>ZFP100, a component of the active U7 snRNP limiting for histone pre-mRNA processing, is required for entry into S phase.</title>
        <authorList>
            <person name="Wagner E.J."/>
            <person name="Marzluff W.F."/>
        </authorList>
    </citation>
    <scope>FUNCTION</scope>
</reference>
<reference key="6">
    <citation type="journal article" date="2009" name="Mol. Cell. Biol.">
        <title>Three proteins of the U7-specific Sm ring function as the molecular ruler to determine the site of 3'-end processing in mammalian histone pre-mRNA.</title>
        <authorList>
            <person name="Yang X.-C."/>
            <person name="Torres M.P."/>
            <person name="Marzluff W.F."/>
            <person name="Dominski Z."/>
        </authorList>
    </citation>
    <scope>IDENTIFICATION IN A HISTONE PRE-MRNA COMPLEX</scope>
    <scope>IDENTIFICATION BY MASS SPECTROMETRY</scope>
</reference>
<reference key="7">
    <citation type="journal article" date="2014" name="Mol. Cell. Proteomics">
        <title>Immunoaffinity enrichment and mass spectrometry analysis of protein methylation.</title>
        <authorList>
            <person name="Guo A."/>
            <person name="Gu H."/>
            <person name="Zhou J."/>
            <person name="Mulhern D."/>
            <person name="Wang Y."/>
            <person name="Lee K.A."/>
            <person name="Yang V."/>
            <person name="Aguiar M."/>
            <person name="Kornhauser J."/>
            <person name="Jia X."/>
            <person name="Ren J."/>
            <person name="Beausoleil S.A."/>
            <person name="Silva J.C."/>
            <person name="Vemulapalli V."/>
            <person name="Bedford M.T."/>
            <person name="Comb M.J."/>
        </authorList>
    </citation>
    <scope>METHYLATION [LARGE SCALE ANALYSIS] AT ARG-41</scope>
    <scope>IDENTIFICATION BY MASS SPECTROMETRY [LARGE SCALE ANALYSIS]</scope>
    <source>
        <tissue>Embryo</tissue>
    </source>
</reference>
<name>LSM11_MOUSE</name>
<keyword id="KW-1017">Isopeptide bond</keyword>
<keyword id="KW-0488">Methylation</keyword>
<keyword id="KW-0507">mRNA processing</keyword>
<keyword id="KW-0539">Nucleus</keyword>
<keyword id="KW-0597">Phosphoprotein</keyword>
<keyword id="KW-1185">Reference proteome</keyword>
<keyword id="KW-0677">Repeat</keyword>
<keyword id="KW-0687">Ribonucleoprotein</keyword>
<keyword id="KW-0694">RNA-binding</keyword>
<keyword id="KW-0832">Ubl conjugation</keyword>
<feature type="chain" id="PRO_0000125588" description="U7 snRNA-associated Sm-like protein LSm11">
    <location>
        <begin position="1"/>
        <end position="361"/>
    </location>
</feature>
<feature type="domain" description="Sm" evidence="2">
    <location>
        <begin position="155"/>
        <end position="230"/>
    </location>
</feature>
<feature type="region of interest" description="Disordered" evidence="3">
    <location>
        <begin position="1"/>
        <end position="26"/>
    </location>
</feature>
<feature type="region of interest" description="Disordered" evidence="3">
    <location>
        <begin position="67"/>
        <end position="142"/>
    </location>
</feature>
<feature type="region of interest" description="SM 1" evidence="9">
    <location>
        <begin position="172"/>
        <end position="205"/>
    </location>
</feature>
<feature type="region of interest" description="Disordered" evidence="3">
    <location>
        <begin position="268"/>
        <end position="335"/>
    </location>
</feature>
<feature type="region of interest" description="SM 2" evidence="9">
    <location>
        <begin position="344"/>
        <end position="357"/>
    </location>
</feature>
<feature type="compositionally biased region" description="Low complexity" evidence="3">
    <location>
        <begin position="76"/>
        <end position="96"/>
    </location>
</feature>
<feature type="compositionally biased region" description="Polar residues" evidence="3">
    <location>
        <begin position="307"/>
        <end position="323"/>
    </location>
</feature>
<feature type="modified residue" description="Phosphoserine" evidence="1">
    <location>
        <position position="15"/>
    </location>
</feature>
<feature type="modified residue" description="Phosphoserine" evidence="1">
    <location>
        <position position="21"/>
    </location>
</feature>
<feature type="modified residue" description="Omega-N-methylarginine" evidence="12">
    <location>
        <position position="41"/>
    </location>
</feature>
<feature type="modified residue" description="Phosphoserine" evidence="1">
    <location>
        <position position="155"/>
    </location>
</feature>
<feature type="modified residue" description="Phosphoserine" evidence="1">
    <location>
        <position position="281"/>
    </location>
</feature>
<feature type="cross-link" description="Glycyl lysine isopeptide (Lys-Gly) (interchain with G-Cter in SUMO2)" evidence="1">
    <location>
        <position position="121"/>
    </location>
</feature>
<feature type="mutagenesis site" description="Does not inhibit interaction with ZNF473. Strongly reduces histone 3' end processing." evidence="5">
    <original>PLL</original>
    <variation>AAA</variation>
    <location>
        <begin position="33"/>
        <end position="35"/>
    </location>
</feature>
<feature type="mutagenesis site" description="Does not inhibit interaction with ZNF473 and histone 3'-end processing." evidence="5">
    <original>YES</original>
    <variation>AAA</variation>
    <location>
        <begin position="59"/>
        <end position="61"/>
    </location>
</feature>
<feature type="mutagenesis site" description="Does not inhibit interaction with ZNF473. Reduces weakly histone 3' end processing." evidence="5">
    <original>PER</original>
    <variation>AAA</variation>
    <location>
        <begin position="108"/>
        <end position="110"/>
    </location>
</feature>
<feature type="mutagenesis site" description="Does not inhibit interaction with ZNF473. Reduces weakly histone 3' end processing." evidence="5">
    <original>MPL</original>
    <variation>AAA</variation>
    <location>
        <begin position="149"/>
        <end position="151"/>
    </location>
</feature>
<accession>Q8BUV6</accession>
<comment type="function">
    <text evidence="4 5 7">Component of the U7 snRNP complex that is involved in the histone 3'-end pre-mRNA processing (PubMed:12975319, PubMed:15824063). Increases U7 snRNA levels but not histone 3'-end pre-mRNA processing activity, when overexpressed (PubMed:12975319, PubMed:15824063). Required for cell cycle progression from G1 to S phases (PubMed:16914750). Binds specifically to the Sm-binding site of U7 snRNA.</text>
</comment>
<comment type="subunit">
    <text evidence="4 5 6 8">Component of the heptameric ring U7 snRNP complex, or U7 Sm protein core complex, at least composed of LSM10, LSM11, SNRPB, SNRPD3, SNRPE, SNRPF, SNRPG and U7 snRNA (PubMed:12975319). Formation of the U7 snRNP is an ATP-dependent process mediated by a specialized SMN complex containing at least the Sm protein core complex and additionally, the U7-specific LSM10 and LSM11 proteins (PubMed:12975319). Identified in a histone pre-mRNA complex, at least composed of ERI1, LSM11, SLBP, SNRPB, SYNCRIP and YBX1 (PubMed:19470752). Interacts (via the Sm domains) with CLNS1A (PubMed:16087681). Interacts with PRMT5, SMN, ZNF473 and WDR77 (PubMed:12975319, PubMed:15824063, PubMed:16087681).</text>
</comment>
<comment type="subcellular location">
    <subcellularLocation>
        <location evidence="1">Nucleus</location>
    </subcellularLocation>
</comment>
<comment type="domain">
    <text evidence="4">The C-terminal SM 1 domain is both necessary for the binding to the Sm-binding site of U7 snRNA and U7 snRNP assembly (PubMed:12975319). The N-terminal domain is essential for histone pre-mRNA cleavage (PubMed:12975319). Amino acids 63-82 are sufficient to interact with ZNF473 (PubMed:12975319).</text>
</comment>
<comment type="PTM">
    <text evidence="6">Not methylated.</text>
</comment>
<comment type="similarity">
    <text evidence="10">Belongs to the snRNP Sm proteins family.</text>
</comment>
<protein>
    <recommendedName>
        <fullName evidence="10">U7 snRNA-associated Sm-like protein LSm11</fullName>
    </recommendedName>
</protein>
<evidence type="ECO:0000250" key="1">
    <source>
        <dbReference type="UniProtKB" id="P83369"/>
    </source>
</evidence>
<evidence type="ECO:0000255" key="2">
    <source>
        <dbReference type="PROSITE-ProRule" id="PRU01346"/>
    </source>
</evidence>
<evidence type="ECO:0000256" key="3">
    <source>
        <dbReference type="SAM" id="MobiDB-lite"/>
    </source>
</evidence>
<evidence type="ECO:0000269" key="4">
    <source>
    </source>
</evidence>
<evidence type="ECO:0000269" key="5">
    <source>
    </source>
</evidence>
<evidence type="ECO:0000269" key="6">
    <source>
    </source>
</evidence>
<evidence type="ECO:0000269" key="7">
    <source>
    </source>
</evidence>
<evidence type="ECO:0000269" key="8">
    <source>
    </source>
</evidence>
<evidence type="ECO:0000303" key="9">
    <source>
    </source>
</evidence>
<evidence type="ECO:0000305" key="10"/>
<evidence type="ECO:0000312" key="11">
    <source>
        <dbReference type="MGI" id="MGI:1919540"/>
    </source>
</evidence>
<evidence type="ECO:0007744" key="12">
    <source>
    </source>
</evidence>
<gene>
    <name evidence="9 11" type="primary">Lsm11</name>
</gene>
<dbReference type="EMBL" id="AF514309">
    <property type="protein sequence ID" value="AAQ08118.1"/>
    <property type="molecule type" value="mRNA"/>
</dbReference>
<dbReference type="EMBL" id="AK082292">
    <property type="protein sequence ID" value="BAC38456.1"/>
    <property type="molecule type" value="mRNA"/>
</dbReference>
<dbReference type="CCDS" id="CCDS36131.1"/>
<dbReference type="RefSeq" id="NP_082461.1">
    <property type="nucleotide sequence ID" value="NM_028185.2"/>
</dbReference>
<dbReference type="SMR" id="Q8BUV6"/>
<dbReference type="BioGRID" id="215285">
    <property type="interactions" value="2"/>
</dbReference>
<dbReference type="CORUM" id="Q8BUV6"/>
<dbReference type="FunCoup" id="Q8BUV6">
    <property type="interactions" value="2254"/>
</dbReference>
<dbReference type="IntAct" id="Q8BUV6">
    <property type="interactions" value="1"/>
</dbReference>
<dbReference type="STRING" id="10090.ENSMUSP00000117531"/>
<dbReference type="GlyGen" id="Q8BUV6">
    <property type="glycosylation" value="1 site"/>
</dbReference>
<dbReference type="iPTMnet" id="Q8BUV6"/>
<dbReference type="PhosphoSitePlus" id="Q8BUV6"/>
<dbReference type="PaxDb" id="10090-ENSMUSP00000117531"/>
<dbReference type="ProteomicsDB" id="252535"/>
<dbReference type="Pumba" id="Q8BUV6"/>
<dbReference type="Antibodypedia" id="48521">
    <property type="antibodies" value="148 antibodies from 22 providers"/>
</dbReference>
<dbReference type="DNASU" id="72290"/>
<dbReference type="Ensembl" id="ENSMUST00000062458.6">
    <property type="protein sequence ID" value="ENSMUSP00000057343.6"/>
    <property type="gene ID" value="ENSMUSG00000044847.14"/>
</dbReference>
<dbReference type="Ensembl" id="ENSMUST00000129820.8">
    <property type="protein sequence ID" value="ENSMUSP00000117531.2"/>
    <property type="gene ID" value="ENSMUSG00000044847.14"/>
</dbReference>
<dbReference type="GeneID" id="72290"/>
<dbReference type="KEGG" id="mmu:72290"/>
<dbReference type="UCSC" id="uc007ins.1">
    <property type="organism name" value="mouse"/>
</dbReference>
<dbReference type="AGR" id="MGI:1919540"/>
<dbReference type="CTD" id="134353"/>
<dbReference type="MGI" id="MGI:1919540">
    <property type="gene designation" value="Lsm11"/>
</dbReference>
<dbReference type="VEuPathDB" id="HostDB:ENSMUSG00000044847"/>
<dbReference type="eggNOG" id="ENOG502QS1B">
    <property type="taxonomic scope" value="Eukaryota"/>
</dbReference>
<dbReference type="GeneTree" id="ENSGT00390000012944"/>
<dbReference type="HOGENOM" id="CLU_065821_0_0_1"/>
<dbReference type="InParanoid" id="Q8BUV6"/>
<dbReference type="OMA" id="QETSECA"/>
<dbReference type="OrthoDB" id="10002367at2759"/>
<dbReference type="PhylomeDB" id="Q8BUV6"/>
<dbReference type="TreeFam" id="TF326954"/>
<dbReference type="Reactome" id="R-MMU-111367">
    <property type="pathway name" value="SLBP independent Processing of Histone Pre-mRNAs"/>
</dbReference>
<dbReference type="Reactome" id="R-MMU-73856">
    <property type="pathway name" value="RNA Polymerase II Transcription Termination"/>
</dbReference>
<dbReference type="Reactome" id="R-MMU-77588">
    <property type="pathway name" value="SLBP Dependent Processing of Replication-Dependent Histone Pre-mRNAs"/>
</dbReference>
<dbReference type="BioGRID-ORCS" id="72290">
    <property type="hits" value="24 hits in 77 CRISPR screens"/>
</dbReference>
<dbReference type="CD-CODE" id="CE726F99">
    <property type="entry name" value="Postsynaptic density"/>
</dbReference>
<dbReference type="PRO" id="PR:Q8BUV6"/>
<dbReference type="Proteomes" id="UP000000589">
    <property type="component" value="Chromosome 11"/>
</dbReference>
<dbReference type="RNAct" id="Q8BUV6">
    <property type="molecule type" value="protein"/>
</dbReference>
<dbReference type="Bgee" id="ENSMUSG00000044847">
    <property type="expression patterns" value="Expressed in nucleus pulposus and 205 other cell types or tissues"/>
</dbReference>
<dbReference type="ExpressionAtlas" id="Q8BUV6">
    <property type="expression patterns" value="baseline and differential"/>
</dbReference>
<dbReference type="GO" id="GO:0071204">
    <property type="term" value="C:histone pre-mRNA 3'end processing complex"/>
    <property type="evidence" value="ECO:0000314"/>
    <property type="project" value="UniProtKB"/>
</dbReference>
<dbReference type="GO" id="GO:0016604">
    <property type="term" value="C:nuclear body"/>
    <property type="evidence" value="ECO:0007669"/>
    <property type="project" value="Ensembl"/>
</dbReference>
<dbReference type="GO" id="GO:0005634">
    <property type="term" value="C:nucleus"/>
    <property type="evidence" value="ECO:0000250"/>
    <property type="project" value="UniProtKB"/>
</dbReference>
<dbReference type="GO" id="GO:0005697">
    <property type="term" value="C:telomerase holoenzyme complex"/>
    <property type="evidence" value="ECO:0007669"/>
    <property type="project" value="Ensembl"/>
</dbReference>
<dbReference type="GO" id="GO:0005683">
    <property type="term" value="C:U7 snRNP"/>
    <property type="evidence" value="ECO:0000314"/>
    <property type="project" value="UniProtKB"/>
</dbReference>
<dbReference type="GO" id="GO:0071209">
    <property type="term" value="F:U7 snRNA binding"/>
    <property type="evidence" value="ECO:0000250"/>
    <property type="project" value="UniProtKB"/>
</dbReference>
<dbReference type="GO" id="GO:0006398">
    <property type="term" value="P:mRNA 3'-end processing by stem-loop binding and cleavage"/>
    <property type="evidence" value="ECO:0000314"/>
    <property type="project" value="UniProtKB"/>
</dbReference>
<dbReference type="GO" id="GO:1900087">
    <property type="term" value="P:positive regulation of G1/S transition of mitotic cell cycle"/>
    <property type="evidence" value="ECO:0000250"/>
    <property type="project" value="UniProtKB"/>
</dbReference>
<dbReference type="GO" id="GO:1902275">
    <property type="term" value="P:regulation of chromatin organization"/>
    <property type="evidence" value="ECO:0000250"/>
    <property type="project" value="UniProtKB"/>
</dbReference>
<dbReference type="CDD" id="cd01739">
    <property type="entry name" value="LSm11_M"/>
    <property type="match status" value="1"/>
</dbReference>
<dbReference type="FunFam" id="2.30.30.100:FF:000158">
    <property type="entry name" value="LSM11, U7 small nuclear RNA associated"/>
    <property type="match status" value="1"/>
</dbReference>
<dbReference type="Gene3D" id="2.30.30.100">
    <property type="match status" value="1"/>
</dbReference>
<dbReference type="InterPro" id="IPR039267">
    <property type="entry name" value="Lsm11"/>
</dbReference>
<dbReference type="InterPro" id="IPR034109">
    <property type="entry name" value="Lsm11_M"/>
</dbReference>
<dbReference type="InterPro" id="IPR010920">
    <property type="entry name" value="LSM_dom_sf"/>
</dbReference>
<dbReference type="InterPro" id="IPR047575">
    <property type="entry name" value="Sm"/>
</dbReference>
<dbReference type="InterPro" id="IPR001163">
    <property type="entry name" value="Sm_dom_euk/arc"/>
</dbReference>
<dbReference type="PANTHER" id="PTHR21415">
    <property type="entry name" value="U7 SNRNA-ASSOCIATED SM-LIKE PROTEIN LSM11"/>
    <property type="match status" value="1"/>
</dbReference>
<dbReference type="PANTHER" id="PTHR21415:SF1">
    <property type="entry name" value="U7 SNRNA-ASSOCIATED SM-LIKE PROTEIN LSM11"/>
    <property type="match status" value="1"/>
</dbReference>
<dbReference type="SMART" id="SM00651">
    <property type="entry name" value="Sm"/>
    <property type="match status" value="1"/>
</dbReference>
<dbReference type="SUPFAM" id="SSF50182">
    <property type="entry name" value="Sm-like ribonucleoproteins"/>
    <property type="match status" value="2"/>
</dbReference>
<dbReference type="PROSITE" id="PS52002">
    <property type="entry name" value="SM"/>
    <property type="match status" value="1"/>
</dbReference>